<sequence length="401" mass="45688">MSHRKFSAPRHGHMGFTPKKRSRTYRGRIKAFPKDDASKPIHLTAFLGYKAGMTHIVRDVDKPGSKVNKKEVVEAVSIIETPPMVIAGVTGYIDTPQGPRALTTIWAEHLSEEARRRFYSNWAKSKKKAFTKYAKKWQDEDGKKLIEADFAKLKKYCSSIRVIAHTQMKILRRRQKKAHLVEIQINGGTIEQKVDWAREHLEKQIQVDTVFSQDEMIDTIGVTKGHGFKGVTSRWHTKKLPRKTHKGLRKVACIGAWHPSRVAFTVARAGQKGFHHRTIINNKIYRIGKSALTEEGKNNGSTEFDLTQKTINPMGGFPRYGLVNQDYVMLRGAILGPKKRLITLRKSLITQTKRVAHEKINLKWIDTSSKTGHGRFQTTAEKRAFMGKLKRDFLAEAENKA</sequence>
<organism>
    <name type="scientific">Caenorhabditis briggsae</name>
    <dbReference type="NCBI Taxonomy" id="6238"/>
    <lineage>
        <taxon>Eukaryota</taxon>
        <taxon>Metazoa</taxon>
        <taxon>Ecdysozoa</taxon>
        <taxon>Nematoda</taxon>
        <taxon>Chromadorea</taxon>
        <taxon>Rhabditida</taxon>
        <taxon>Rhabditina</taxon>
        <taxon>Rhabditomorpha</taxon>
        <taxon>Rhabditoidea</taxon>
        <taxon>Rhabditidae</taxon>
        <taxon>Peloderinae</taxon>
        <taxon>Caenorhabditis</taxon>
    </lineage>
</organism>
<proteinExistence type="inferred from homology"/>
<gene>
    <name type="primary">rpl-3</name>
    <name type="ORF">CBG03612</name>
</gene>
<keyword id="KW-0963">Cytoplasm</keyword>
<keyword id="KW-1185">Reference proteome</keyword>
<keyword id="KW-0687">Ribonucleoprotein</keyword>
<keyword id="KW-0689">Ribosomal protein</keyword>
<name>RL3_CAEBR</name>
<evidence type="ECO:0000250" key="1"/>
<evidence type="ECO:0000256" key="2">
    <source>
        <dbReference type="SAM" id="MobiDB-lite"/>
    </source>
</evidence>
<evidence type="ECO:0000305" key="3"/>
<dbReference type="EMBL" id="HE601339">
    <property type="protein sequence ID" value="CAP24473.1"/>
    <property type="molecule type" value="Genomic_DNA"/>
</dbReference>
<dbReference type="EMBL" id="AF247847">
    <property type="protein sequence ID" value="AAF77028.1"/>
    <property type="molecule type" value="Genomic_DNA"/>
</dbReference>
<dbReference type="SMR" id="Q9NBK4"/>
<dbReference type="FunCoup" id="Q9NBK4">
    <property type="interactions" value="950"/>
</dbReference>
<dbReference type="STRING" id="6238.Q9NBK4"/>
<dbReference type="EnsemblMetazoa" id="CBG03612.1">
    <property type="protein sequence ID" value="CBG03612.1"/>
    <property type="gene ID" value="WBGene00026442"/>
</dbReference>
<dbReference type="KEGG" id="cbr:CBG_03612"/>
<dbReference type="CTD" id="8589081"/>
<dbReference type="WormBase" id="CBG03612">
    <property type="protein sequence ID" value="CBP00953"/>
    <property type="gene ID" value="WBGene00026442"/>
    <property type="gene designation" value="Cbr-rpl-3"/>
</dbReference>
<dbReference type="eggNOG" id="KOG0746">
    <property type="taxonomic scope" value="Eukaryota"/>
</dbReference>
<dbReference type="HOGENOM" id="CLU_033361_2_1_1"/>
<dbReference type="InParanoid" id="Q9NBK4"/>
<dbReference type="OMA" id="QRTEYNK"/>
<dbReference type="OrthoDB" id="1611972at2759"/>
<dbReference type="Proteomes" id="UP000008549">
    <property type="component" value="Unassembled WGS sequence"/>
</dbReference>
<dbReference type="GO" id="GO:0022625">
    <property type="term" value="C:cytosolic large ribosomal subunit"/>
    <property type="evidence" value="ECO:0000318"/>
    <property type="project" value="GO_Central"/>
</dbReference>
<dbReference type="GO" id="GO:0003723">
    <property type="term" value="F:RNA binding"/>
    <property type="evidence" value="ECO:0000318"/>
    <property type="project" value="GO_Central"/>
</dbReference>
<dbReference type="GO" id="GO:0003735">
    <property type="term" value="F:structural constituent of ribosome"/>
    <property type="evidence" value="ECO:0000318"/>
    <property type="project" value="GO_Central"/>
</dbReference>
<dbReference type="GO" id="GO:0006412">
    <property type="term" value="P:translation"/>
    <property type="evidence" value="ECO:0000318"/>
    <property type="project" value="GO_Central"/>
</dbReference>
<dbReference type="FunFam" id="2.40.30.10:FF:000079">
    <property type="entry name" value="60S ribosomal protein L3"/>
    <property type="match status" value="1"/>
</dbReference>
<dbReference type="FunFam" id="3.30.1430.10:FF:000001">
    <property type="entry name" value="60S ribosomal protein L3"/>
    <property type="match status" value="1"/>
</dbReference>
<dbReference type="FunFam" id="4.10.960.10:FF:000002">
    <property type="entry name" value="60S ribosomal protein L3"/>
    <property type="match status" value="1"/>
</dbReference>
<dbReference type="FunFam" id="2.40.30.10:FF:000351">
    <property type="entry name" value="Ribosomal protein L3"/>
    <property type="match status" value="1"/>
</dbReference>
<dbReference type="Gene3D" id="3.30.1430.10">
    <property type="match status" value="1"/>
</dbReference>
<dbReference type="Gene3D" id="4.10.960.10">
    <property type="entry name" value="Ribosomal protein L3, domain 3"/>
    <property type="match status" value="1"/>
</dbReference>
<dbReference type="Gene3D" id="2.40.30.10">
    <property type="entry name" value="Translation factors"/>
    <property type="match status" value="1"/>
</dbReference>
<dbReference type="InterPro" id="IPR045077">
    <property type="entry name" value="L3_arc_euk"/>
</dbReference>
<dbReference type="InterPro" id="IPR044892">
    <property type="entry name" value="Ribosomal_L3_dom_3_arc_sf"/>
</dbReference>
<dbReference type="InterPro" id="IPR000597">
    <property type="entry name" value="Ribosomal_uL3"/>
</dbReference>
<dbReference type="InterPro" id="IPR019926">
    <property type="entry name" value="Ribosomal_uL3_CS"/>
</dbReference>
<dbReference type="InterPro" id="IPR009000">
    <property type="entry name" value="Transl_B-barrel_sf"/>
</dbReference>
<dbReference type="PANTHER" id="PTHR11363">
    <property type="entry name" value="60S RIBOSOMAL PROTEIN L3-RELATED"/>
    <property type="match status" value="1"/>
</dbReference>
<dbReference type="PANTHER" id="PTHR11363:SF5">
    <property type="entry name" value="LARGE RIBOSOMAL SUBUNIT PROTEIN UL3"/>
    <property type="match status" value="1"/>
</dbReference>
<dbReference type="Pfam" id="PF00297">
    <property type="entry name" value="Ribosomal_L3"/>
    <property type="match status" value="1"/>
</dbReference>
<dbReference type="SUPFAM" id="SSF50447">
    <property type="entry name" value="Translation proteins"/>
    <property type="match status" value="1"/>
</dbReference>
<dbReference type="PROSITE" id="PS00474">
    <property type="entry name" value="RIBOSOMAL_L3"/>
    <property type="match status" value="1"/>
</dbReference>
<comment type="function">
    <text evidence="1">The L3 protein is a component of the large subunit of cytoplasmic ribosomes.</text>
</comment>
<comment type="subcellular location">
    <subcellularLocation>
        <location>Cytoplasm</location>
    </subcellularLocation>
</comment>
<comment type="similarity">
    <text evidence="3">Belongs to the universal ribosomal protein uL3 family.</text>
</comment>
<accession>Q9NBK4</accession>
<accession>A8WVG2</accession>
<accession>Q61YB8</accession>
<reference key="1">
    <citation type="journal article" date="2003" name="PLoS Biol.">
        <title>The genome sequence of Caenorhabditis briggsae: a platform for comparative genomics.</title>
        <authorList>
            <person name="Stein L.D."/>
            <person name="Bao Z."/>
            <person name="Blasiar D."/>
            <person name="Blumenthal T."/>
            <person name="Brent M.R."/>
            <person name="Chen N."/>
            <person name="Chinwalla A."/>
            <person name="Clarke L."/>
            <person name="Clee C."/>
            <person name="Coghlan A."/>
            <person name="Coulson A."/>
            <person name="D'Eustachio P."/>
            <person name="Fitch D.H.A."/>
            <person name="Fulton L.A."/>
            <person name="Fulton R.E."/>
            <person name="Griffiths-Jones S."/>
            <person name="Harris T.W."/>
            <person name="Hillier L.W."/>
            <person name="Kamath R."/>
            <person name="Kuwabara P.E."/>
            <person name="Mardis E.R."/>
            <person name="Marra M.A."/>
            <person name="Miner T.L."/>
            <person name="Minx P."/>
            <person name="Mullikin J.C."/>
            <person name="Plumb R.W."/>
            <person name="Rogers J."/>
            <person name="Schein J.E."/>
            <person name="Sohrmann M."/>
            <person name="Spieth J."/>
            <person name="Stajich J.E."/>
            <person name="Wei C."/>
            <person name="Willey D."/>
            <person name="Wilson R.K."/>
            <person name="Durbin R.M."/>
            <person name="Waterston R.H."/>
        </authorList>
    </citation>
    <scope>NUCLEOTIDE SEQUENCE [LARGE SCALE GENOMIC DNA]</scope>
    <source>
        <strain>AF16</strain>
    </source>
</reference>
<reference key="2">
    <citation type="journal article" date="2000" name="Genes Dev.">
        <title>Unproductively spliced ribosomal protein mRNAs are natural targets of mRNA surveillance in C. elegans.</title>
        <authorList>
            <person name="Mitrovich Q.M."/>
            <person name="Anderson P."/>
        </authorList>
    </citation>
    <scope>NUCLEOTIDE SEQUENCE [GENOMIC DNA] OF 1-246</scope>
</reference>
<feature type="chain" id="PRO_0000077234" description="Large ribosomal subunit protein uL3">
    <location>
        <begin position="1"/>
        <end position="401"/>
    </location>
</feature>
<feature type="region of interest" description="Disordered" evidence="2">
    <location>
        <begin position="1"/>
        <end position="21"/>
    </location>
</feature>
<protein>
    <recommendedName>
        <fullName evidence="3">Large ribosomal subunit protein uL3</fullName>
    </recommendedName>
    <alternativeName>
        <fullName>60S ribosomal protein L3</fullName>
    </alternativeName>
</protein>